<accession>C3K5Z8</accession>
<feature type="chain" id="PRO_1000202107" description="Ribosome-recycling factor">
    <location>
        <begin position="1"/>
        <end position="185"/>
    </location>
</feature>
<name>RRF_PSEFS</name>
<comment type="function">
    <text evidence="1">Responsible for the release of ribosomes from messenger RNA at the termination of protein biosynthesis. May increase the efficiency of translation by recycling ribosomes from one round of translation to another.</text>
</comment>
<comment type="subcellular location">
    <subcellularLocation>
        <location evidence="1">Cytoplasm</location>
    </subcellularLocation>
</comment>
<comment type="similarity">
    <text evidence="1">Belongs to the RRF family.</text>
</comment>
<dbReference type="EMBL" id="AM181176">
    <property type="protein sequence ID" value="CAY47530.1"/>
    <property type="molecule type" value="Genomic_DNA"/>
</dbReference>
<dbReference type="RefSeq" id="WP_012722596.1">
    <property type="nucleotide sequence ID" value="NC_012660.1"/>
</dbReference>
<dbReference type="SMR" id="C3K5Z8"/>
<dbReference type="STRING" id="294.SRM1_01132"/>
<dbReference type="GeneID" id="88823640"/>
<dbReference type="eggNOG" id="COG0233">
    <property type="taxonomic scope" value="Bacteria"/>
</dbReference>
<dbReference type="HOGENOM" id="CLU_073981_2_1_6"/>
<dbReference type="OrthoDB" id="9804006at2"/>
<dbReference type="GO" id="GO:0005829">
    <property type="term" value="C:cytosol"/>
    <property type="evidence" value="ECO:0007669"/>
    <property type="project" value="GOC"/>
</dbReference>
<dbReference type="GO" id="GO:0043023">
    <property type="term" value="F:ribosomal large subunit binding"/>
    <property type="evidence" value="ECO:0007669"/>
    <property type="project" value="TreeGrafter"/>
</dbReference>
<dbReference type="GO" id="GO:0002184">
    <property type="term" value="P:cytoplasmic translational termination"/>
    <property type="evidence" value="ECO:0007669"/>
    <property type="project" value="TreeGrafter"/>
</dbReference>
<dbReference type="CDD" id="cd00520">
    <property type="entry name" value="RRF"/>
    <property type="match status" value="1"/>
</dbReference>
<dbReference type="FunFam" id="1.10.132.20:FF:000001">
    <property type="entry name" value="Ribosome-recycling factor"/>
    <property type="match status" value="1"/>
</dbReference>
<dbReference type="FunFam" id="3.30.1360.40:FF:000001">
    <property type="entry name" value="Ribosome-recycling factor"/>
    <property type="match status" value="1"/>
</dbReference>
<dbReference type="Gene3D" id="3.30.1360.40">
    <property type="match status" value="1"/>
</dbReference>
<dbReference type="Gene3D" id="1.10.132.20">
    <property type="entry name" value="Ribosome-recycling factor"/>
    <property type="match status" value="1"/>
</dbReference>
<dbReference type="HAMAP" id="MF_00040">
    <property type="entry name" value="RRF"/>
    <property type="match status" value="1"/>
</dbReference>
<dbReference type="InterPro" id="IPR002661">
    <property type="entry name" value="Ribosome_recyc_fac"/>
</dbReference>
<dbReference type="InterPro" id="IPR023584">
    <property type="entry name" value="Ribosome_recyc_fac_dom"/>
</dbReference>
<dbReference type="InterPro" id="IPR036191">
    <property type="entry name" value="RRF_sf"/>
</dbReference>
<dbReference type="NCBIfam" id="TIGR00496">
    <property type="entry name" value="frr"/>
    <property type="match status" value="1"/>
</dbReference>
<dbReference type="PANTHER" id="PTHR20982:SF3">
    <property type="entry name" value="MITOCHONDRIAL RIBOSOME RECYCLING FACTOR PSEUDO 1"/>
    <property type="match status" value="1"/>
</dbReference>
<dbReference type="PANTHER" id="PTHR20982">
    <property type="entry name" value="RIBOSOME RECYCLING FACTOR"/>
    <property type="match status" value="1"/>
</dbReference>
<dbReference type="Pfam" id="PF01765">
    <property type="entry name" value="RRF"/>
    <property type="match status" value="1"/>
</dbReference>
<dbReference type="SUPFAM" id="SSF55194">
    <property type="entry name" value="Ribosome recycling factor, RRF"/>
    <property type="match status" value="1"/>
</dbReference>
<organism>
    <name type="scientific">Pseudomonas fluorescens (strain SBW25)</name>
    <dbReference type="NCBI Taxonomy" id="216595"/>
    <lineage>
        <taxon>Bacteria</taxon>
        <taxon>Pseudomonadati</taxon>
        <taxon>Pseudomonadota</taxon>
        <taxon>Gammaproteobacteria</taxon>
        <taxon>Pseudomonadales</taxon>
        <taxon>Pseudomonadaceae</taxon>
        <taxon>Pseudomonas</taxon>
    </lineage>
</organism>
<reference key="1">
    <citation type="journal article" date="2009" name="Genome Biol.">
        <title>Genomic and genetic analyses of diversity and plant interactions of Pseudomonas fluorescens.</title>
        <authorList>
            <person name="Silby M.W."/>
            <person name="Cerdeno-Tarraga A.M."/>
            <person name="Vernikos G.S."/>
            <person name="Giddens S.R."/>
            <person name="Jackson R.W."/>
            <person name="Preston G.M."/>
            <person name="Zhang X.-X."/>
            <person name="Moon C.D."/>
            <person name="Gehrig S.M."/>
            <person name="Godfrey S.A.C."/>
            <person name="Knight C.G."/>
            <person name="Malone J.G."/>
            <person name="Robinson Z."/>
            <person name="Spiers A.J."/>
            <person name="Harris S."/>
            <person name="Challis G.L."/>
            <person name="Yaxley A.M."/>
            <person name="Harris D."/>
            <person name="Seeger K."/>
            <person name="Murphy L."/>
            <person name="Rutter S."/>
            <person name="Squares R."/>
            <person name="Quail M.A."/>
            <person name="Saunders E."/>
            <person name="Mavromatis K."/>
            <person name="Brettin T.S."/>
            <person name="Bentley S.D."/>
            <person name="Hothersall J."/>
            <person name="Stephens E."/>
            <person name="Thomas C.M."/>
            <person name="Parkhill J."/>
            <person name="Levy S.B."/>
            <person name="Rainey P.B."/>
            <person name="Thomson N.R."/>
        </authorList>
    </citation>
    <scope>NUCLEOTIDE SEQUENCE [LARGE SCALE GENOMIC DNA]</scope>
    <source>
        <strain>SBW25</strain>
    </source>
</reference>
<keyword id="KW-0963">Cytoplasm</keyword>
<keyword id="KW-0648">Protein biosynthesis</keyword>
<sequence length="185" mass="20309">MINEIKKDAQARMQKSLESLSHAFGQIRTGKAHPSILGSVMVPYYGSDTPISSVANITVKDSRTLQVVAFERNMLGAVDKAIQSAGLNLNPTNLGELLLISMPALTEETRKGFTKQARSAAEDARVAVRNIRRDALGDLKKLVKDKEISEDEERRATADIDKLTKDAEAQITKATEEKEKDLMAV</sequence>
<gene>
    <name evidence="1" type="primary">frr</name>
    <name type="ordered locus">PFLU_1273</name>
</gene>
<evidence type="ECO:0000255" key="1">
    <source>
        <dbReference type="HAMAP-Rule" id="MF_00040"/>
    </source>
</evidence>
<proteinExistence type="inferred from homology"/>
<protein>
    <recommendedName>
        <fullName evidence="1">Ribosome-recycling factor</fullName>
        <shortName evidence="1">RRF</shortName>
    </recommendedName>
    <alternativeName>
        <fullName evidence="1">Ribosome-releasing factor</fullName>
    </alternativeName>
</protein>